<gene>
    <name evidence="1" type="primary">proQ</name>
    <name type="ordered locus">YPK_1782</name>
</gene>
<feature type="chain" id="PRO_1000133314" description="RNA chaperone ProQ">
    <location>
        <begin position="1"/>
        <end position="237"/>
    </location>
</feature>
<feature type="region of interest" description="Disordered" evidence="2">
    <location>
        <begin position="106"/>
        <end position="188"/>
    </location>
</feature>
<feature type="compositionally biased region" description="Basic and acidic residues" evidence="2">
    <location>
        <begin position="146"/>
        <end position="158"/>
    </location>
</feature>
<accession>B1JIC7</accession>
<comment type="function">
    <text evidence="1">RNA chaperone with significant RNA binding, RNA strand exchange and RNA duplexing activities. May regulate ProP activity through an RNA-based, post-transcriptional mechanism.</text>
</comment>
<comment type="subcellular location">
    <subcellularLocation>
        <location evidence="1">Cytoplasm</location>
    </subcellularLocation>
</comment>
<comment type="similarity">
    <text evidence="1">Belongs to the ProQ family.</text>
</comment>
<organism>
    <name type="scientific">Yersinia pseudotuberculosis serotype O:3 (strain YPIII)</name>
    <dbReference type="NCBI Taxonomy" id="502800"/>
    <lineage>
        <taxon>Bacteria</taxon>
        <taxon>Pseudomonadati</taxon>
        <taxon>Pseudomonadota</taxon>
        <taxon>Gammaproteobacteria</taxon>
        <taxon>Enterobacterales</taxon>
        <taxon>Yersiniaceae</taxon>
        <taxon>Yersinia</taxon>
    </lineage>
</organism>
<sequence>MENQPKLNSSKEVIAFLAERFPLCFTAEGEARPLKIGIFQDLVERVQGEENLSKTQLRSALRLYTSSWRYLYGVKVGAERVDLDGNPCGVLEEQHVEHARKQLEEAKARVQAQRAEQQAKKREAAIAAGETPEPRRPRPAGKKPAPRREAGAAPENRKPRQSPRPQQVRPPRPQVEENQPRPVPVTDISKLQIGQEIKVRAGKSAMDATVLEIAKDGVRVQLSSGLAMIVRAEHLQF</sequence>
<reference key="1">
    <citation type="submission" date="2008-02" db="EMBL/GenBank/DDBJ databases">
        <title>Complete sequence of Yersinia pseudotuberculosis YPIII.</title>
        <authorList>
            <consortium name="US DOE Joint Genome Institute"/>
            <person name="Copeland A."/>
            <person name="Lucas S."/>
            <person name="Lapidus A."/>
            <person name="Glavina del Rio T."/>
            <person name="Dalin E."/>
            <person name="Tice H."/>
            <person name="Bruce D."/>
            <person name="Goodwin L."/>
            <person name="Pitluck S."/>
            <person name="Munk A.C."/>
            <person name="Brettin T."/>
            <person name="Detter J.C."/>
            <person name="Han C."/>
            <person name="Tapia R."/>
            <person name="Schmutz J."/>
            <person name="Larimer F."/>
            <person name="Land M."/>
            <person name="Hauser L."/>
            <person name="Challacombe J.F."/>
            <person name="Green L."/>
            <person name="Lindler L.E."/>
            <person name="Nikolich M.P."/>
            <person name="Richardson P."/>
        </authorList>
    </citation>
    <scope>NUCLEOTIDE SEQUENCE [LARGE SCALE GENOMIC DNA]</scope>
    <source>
        <strain>YPIII</strain>
    </source>
</reference>
<keyword id="KW-0143">Chaperone</keyword>
<keyword id="KW-0963">Cytoplasm</keyword>
<keyword id="KW-0694">RNA-binding</keyword>
<name>PROQ_YERPY</name>
<proteinExistence type="inferred from homology"/>
<dbReference type="EMBL" id="CP000950">
    <property type="protein sequence ID" value="ACA68073.1"/>
    <property type="molecule type" value="Genomic_DNA"/>
</dbReference>
<dbReference type="RefSeq" id="WP_002210849.1">
    <property type="nucleotide sequence ID" value="NZ_CP009792.1"/>
</dbReference>
<dbReference type="SMR" id="B1JIC7"/>
<dbReference type="GeneID" id="96665860"/>
<dbReference type="KEGG" id="ypy:YPK_1782"/>
<dbReference type="PATRIC" id="fig|502800.11.peg.2448"/>
<dbReference type="GO" id="GO:0005829">
    <property type="term" value="C:cytosol"/>
    <property type="evidence" value="ECO:0007669"/>
    <property type="project" value="TreeGrafter"/>
</dbReference>
<dbReference type="GO" id="GO:0033592">
    <property type="term" value="F:RNA strand annealing activity"/>
    <property type="evidence" value="ECO:0007669"/>
    <property type="project" value="UniProtKB-UniRule"/>
</dbReference>
<dbReference type="GO" id="GO:0034057">
    <property type="term" value="F:RNA strand-exchange activity"/>
    <property type="evidence" value="ECO:0007669"/>
    <property type="project" value="UniProtKB-UniRule"/>
</dbReference>
<dbReference type="GO" id="GO:0010608">
    <property type="term" value="P:post-transcriptional regulation of gene expression"/>
    <property type="evidence" value="ECO:0007669"/>
    <property type="project" value="InterPro"/>
</dbReference>
<dbReference type="FunFam" id="1.10.1710.10:FF:000001">
    <property type="entry name" value="RNA chaperone ProQ"/>
    <property type="match status" value="1"/>
</dbReference>
<dbReference type="Gene3D" id="1.10.1710.10">
    <property type="entry name" value="ProQ/FinO domain"/>
    <property type="match status" value="1"/>
</dbReference>
<dbReference type="HAMAP" id="MF_00749">
    <property type="entry name" value="ProQ"/>
    <property type="match status" value="1"/>
</dbReference>
<dbReference type="InterPro" id="IPR023529">
    <property type="entry name" value="ProQ"/>
</dbReference>
<dbReference type="InterPro" id="IPR016103">
    <property type="entry name" value="ProQ/FinO"/>
</dbReference>
<dbReference type="InterPro" id="IPR036442">
    <property type="entry name" value="ProQ/FinO_sf"/>
</dbReference>
<dbReference type="InterPro" id="IPR035236">
    <property type="entry name" value="ProQ_C"/>
</dbReference>
<dbReference type="NCBIfam" id="NF003434">
    <property type="entry name" value="PRK04950.1"/>
    <property type="match status" value="1"/>
</dbReference>
<dbReference type="PANTHER" id="PTHR38106">
    <property type="entry name" value="RNA CHAPERONE PROQ"/>
    <property type="match status" value="1"/>
</dbReference>
<dbReference type="PANTHER" id="PTHR38106:SF1">
    <property type="entry name" value="RNA CHAPERONE PROQ"/>
    <property type="match status" value="1"/>
</dbReference>
<dbReference type="Pfam" id="PF04352">
    <property type="entry name" value="ProQ"/>
    <property type="match status" value="1"/>
</dbReference>
<dbReference type="Pfam" id="PF17516">
    <property type="entry name" value="ProQ_C"/>
    <property type="match status" value="1"/>
</dbReference>
<dbReference type="SMART" id="SM00945">
    <property type="entry name" value="ProQ"/>
    <property type="match status" value="1"/>
</dbReference>
<dbReference type="SUPFAM" id="SSF48657">
    <property type="entry name" value="FinO-like"/>
    <property type="match status" value="1"/>
</dbReference>
<protein>
    <recommendedName>
        <fullName evidence="1">RNA chaperone ProQ</fullName>
    </recommendedName>
</protein>
<evidence type="ECO:0000255" key="1">
    <source>
        <dbReference type="HAMAP-Rule" id="MF_00749"/>
    </source>
</evidence>
<evidence type="ECO:0000256" key="2">
    <source>
        <dbReference type="SAM" id="MobiDB-lite"/>
    </source>
</evidence>